<sequence length="358" mass="38854">MEQIQVELGVRSYPIFIGQNLLENSDYFSSYLQGKKILIVTNDTIAPLYLAKVQALLASYQCADPVILPDGEQYKTLSQMDAIFTSLLAQNMGRDSVLIALGGGVIGDMTGFAAACYQRGVDFIQIPTTLLSQVDSSVGGKTAVNHPMGKNMIGAFYQPKMVAIDTACLHTLPAREFAAGMAEVIKYGIIWDGSFFSWLEQNVAALKSLDEAALTYAIAKCCQIKADVVAQDETEQGVRALLNLGHTFGHAIEAEMGYGVWLHGEAVAAGTVLAAQTASKMGLVDQSIVCRIEAIFEAFDLPTEAPEAMDFEQFIKHMRRDKKVLNGKLRLVLPKAIGQAEVYGEVSESLLQEVISRA</sequence>
<accession>A3Q9D8</accession>
<reference key="1">
    <citation type="submission" date="2007-03" db="EMBL/GenBank/DDBJ databases">
        <title>Complete sequence of Shewanella loihica PV-4.</title>
        <authorList>
            <consortium name="US DOE Joint Genome Institute"/>
            <person name="Copeland A."/>
            <person name="Lucas S."/>
            <person name="Lapidus A."/>
            <person name="Barry K."/>
            <person name="Detter J.C."/>
            <person name="Glavina del Rio T."/>
            <person name="Hammon N."/>
            <person name="Israni S."/>
            <person name="Dalin E."/>
            <person name="Tice H."/>
            <person name="Pitluck S."/>
            <person name="Chain P."/>
            <person name="Malfatti S."/>
            <person name="Shin M."/>
            <person name="Vergez L."/>
            <person name="Schmutz J."/>
            <person name="Larimer F."/>
            <person name="Land M."/>
            <person name="Hauser L."/>
            <person name="Kyrpides N."/>
            <person name="Mikhailova N."/>
            <person name="Romine M.F."/>
            <person name="Serres G."/>
            <person name="Fredrickson J."/>
            <person name="Tiedje J."/>
            <person name="Richardson P."/>
        </authorList>
    </citation>
    <scope>NUCLEOTIDE SEQUENCE [LARGE SCALE GENOMIC DNA]</scope>
    <source>
        <strain>ATCC BAA-1088 / PV-4</strain>
    </source>
</reference>
<dbReference type="EC" id="4.2.3.4" evidence="1"/>
<dbReference type="EMBL" id="CP000606">
    <property type="protein sequence ID" value="ABO22086.1"/>
    <property type="molecule type" value="Genomic_DNA"/>
</dbReference>
<dbReference type="RefSeq" id="WP_011864021.1">
    <property type="nucleotide sequence ID" value="NC_009092.1"/>
</dbReference>
<dbReference type="SMR" id="A3Q9D8"/>
<dbReference type="STRING" id="323850.Shew_0214"/>
<dbReference type="KEGG" id="slo:Shew_0214"/>
<dbReference type="eggNOG" id="COG0337">
    <property type="taxonomic scope" value="Bacteria"/>
</dbReference>
<dbReference type="HOGENOM" id="CLU_001201_0_2_6"/>
<dbReference type="OrthoDB" id="9806583at2"/>
<dbReference type="UniPathway" id="UPA00053">
    <property type="reaction ID" value="UER00085"/>
</dbReference>
<dbReference type="Proteomes" id="UP000001558">
    <property type="component" value="Chromosome"/>
</dbReference>
<dbReference type="GO" id="GO:0005737">
    <property type="term" value="C:cytoplasm"/>
    <property type="evidence" value="ECO:0007669"/>
    <property type="project" value="UniProtKB-SubCell"/>
</dbReference>
<dbReference type="GO" id="GO:0003856">
    <property type="term" value="F:3-dehydroquinate synthase activity"/>
    <property type="evidence" value="ECO:0007669"/>
    <property type="project" value="UniProtKB-UniRule"/>
</dbReference>
<dbReference type="GO" id="GO:0046872">
    <property type="term" value="F:metal ion binding"/>
    <property type="evidence" value="ECO:0007669"/>
    <property type="project" value="UniProtKB-KW"/>
</dbReference>
<dbReference type="GO" id="GO:0000166">
    <property type="term" value="F:nucleotide binding"/>
    <property type="evidence" value="ECO:0007669"/>
    <property type="project" value="UniProtKB-KW"/>
</dbReference>
<dbReference type="GO" id="GO:0008652">
    <property type="term" value="P:amino acid biosynthetic process"/>
    <property type="evidence" value="ECO:0007669"/>
    <property type="project" value="UniProtKB-KW"/>
</dbReference>
<dbReference type="GO" id="GO:0009073">
    <property type="term" value="P:aromatic amino acid family biosynthetic process"/>
    <property type="evidence" value="ECO:0007669"/>
    <property type="project" value="UniProtKB-KW"/>
</dbReference>
<dbReference type="GO" id="GO:0009423">
    <property type="term" value="P:chorismate biosynthetic process"/>
    <property type="evidence" value="ECO:0007669"/>
    <property type="project" value="UniProtKB-UniRule"/>
</dbReference>
<dbReference type="CDD" id="cd08195">
    <property type="entry name" value="DHQS"/>
    <property type="match status" value="1"/>
</dbReference>
<dbReference type="FunFam" id="1.20.1090.10:FF:000002">
    <property type="entry name" value="3-dehydroquinate synthase"/>
    <property type="match status" value="1"/>
</dbReference>
<dbReference type="FunFam" id="3.40.50.1970:FF:000001">
    <property type="entry name" value="3-dehydroquinate synthase"/>
    <property type="match status" value="1"/>
</dbReference>
<dbReference type="Gene3D" id="3.40.50.1970">
    <property type="match status" value="1"/>
</dbReference>
<dbReference type="Gene3D" id="1.20.1090.10">
    <property type="entry name" value="Dehydroquinate synthase-like - alpha domain"/>
    <property type="match status" value="1"/>
</dbReference>
<dbReference type="HAMAP" id="MF_00110">
    <property type="entry name" value="DHQ_synthase"/>
    <property type="match status" value="1"/>
</dbReference>
<dbReference type="InterPro" id="IPR050071">
    <property type="entry name" value="Dehydroquinate_synthase"/>
</dbReference>
<dbReference type="InterPro" id="IPR016037">
    <property type="entry name" value="DHQ_synth_AroB"/>
</dbReference>
<dbReference type="InterPro" id="IPR030963">
    <property type="entry name" value="DHQ_synth_fam"/>
</dbReference>
<dbReference type="InterPro" id="IPR030960">
    <property type="entry name" value="DHQS/DOIS_N"/>
</dbReference>
<dbReference type="InterPro" id="IPR056179">
    <property type="entry name" value="DHQS_C"/>
</dbReference>
<dbReference type="NCBIfam" id="TIGR01357">
    <property type="entry name" value="aroB"/>
    <property type="match status" value="1"/>
</dbReference>
<dbReference type="PANTHER" id="PTHR43622">
    <property type="entry name" value="3-DEHYDROQUINATE SYNTHASE"/>
    <property type="match status" value="1"/>
</dbReference>
<dbReference type="PANTHER" id="PTHR43622:SF7">
    <property type="entry name" value="3-DEHYDROQUINATE SYNTHASE, CHLOROPLASTIC"/>
    <property type="match status" value="1"/>
</dbReference>
<dbReference type="Pfam" id="PF01761">
    <property type="entry name" value="DHQ_synthase"/>
    <property type="match status" value="1"/>
</dbReference>
<dbReference type="Pfam" id="PF24621">
    <property type="entry name" value="DHQS_C"/>
    <property type="match status" value="1"/>
</dbReference>
<dbReference type="PIRSF" id="PIRSF001455">
    <property type="entry name" value="DHQ_synth"/>
    <property type="match status" value="1"/>
</dbReference>
<dbReference type="SUPFAM" id="SSF56796">
    <property type="entry name" value="Dehydroquinate synthase-like"/>
    <property type="match status" value="1"/>
</dbReference>
<name>AROB_SHELP</name>
<protein>
    <recommendedName>
        <fullName evidence="1">3-dehydroquinate synthase</fullName>
        <shortName evidence="1">DHQS</shortName>
        <ecNumber evidence="1">4.2.3.4</ecNumber>
    </recommendedName>
</protein>
<comment type="function">
    <text evidence="1">Catalyzes the conversion of 3-deoxy-D-arabino-heptulosonate 7-phosphate (DAHP) to dehydroquinate (DHQ).</text>
</comment>
<comment type="catalytic activity">
    <reaction evidence="1">
        <text>7-phospho-2-dehydro-3-deoxy-D-arabino-heptonate = 3-dehydroquinate + phosphate</text>
        <dbReference type="Rhea" id="RHEA:21968"/>
        <dbReference type="ChEBI" id="CHEBI:32364"/>
        <dbReference type="ChEBI" id="CHEBI:43474"/>
        <dbReference type="ChEBI" id="CHEBI:58394"/>
        <dbReference type="EC" id="4.2.3.4"/>
    </reaction>
</comment>
<comment type="cofactor">
    <cofactor evidence="1">
        <name>Co(2+)</name>
        <dbReference type="ChEBI" id="CHEBI:48828"/>
    </cofactor>
    <cofactor evidence="1">
        <name>Zn(2+)</name>
        <dbReference type="ChEBI" id="CHEBI:29105"/>
    </cofactor>
    <text evidence="1">Binds 1 divalent metal cation per subunit. Can use either Co(2+) or Zn(2+).</text>
</comment>
<comment type="cofactor">
    <cofactor evidence="1">
        <name>NAD(+)</name>
        <dbReference type="ChEBI" id="CHEBI:57540"/>
    </cofactor>
</comment>
<comment type="pathway">
    <text evidence="1">Metabolic intermediate biosynthesis; chorismate biosynthesis; chorismate from D-erythrose 4-phosphate and phosphoenolpyruvate: step 2/7.</text>
</comment>
<comment type="subcellular location">
    <subcellularLocation>
        <location evidence="1">Cytoplasm</location>
    </subcellularLocation>
</comment>
<comment type="similarity">
    <text evidence="1">Belongs to the sugar phosphate cyclases superfamily. Dehydroquinate synthase family.</text>
</comment>
<feature type="chain" id="PRO_1000094612" description="3-dehydroquinate synthase">
    <location>
        <begin position="1"/>
        <end position="358"/>
    </location>
</feature>
<feature type="binding site" evidence="1">
    <location>
        <begin position="70"/>
        <end position="75"/>
    </location>
    <ligand>
        <name>NAD(+)</name>
        <dbReference type="ChEBI" id="CHEBI:57540"/>
    </ligand>
</feature>
<feature type="binding site" evidence="1">
    <location>
        <begin position="104"/>
        <end position="108"/>
    </location>
    <ligand>
        <name>NAD(+)</name>
        <dbReference type="ChEBI" id="CHEBI:57540"/>
    </ligand>
</feature>
<feature type="binding site" evidence="1">
    <location>
        <begin position="128"/>
        <end position="129"/>
    </location>
    <ligand>
        <name>NAD(+)</name>
        <dbReference type="ChEBI" id="CHEBI:57540"/>
    </ligand>
</feature>
<feature type="binding site" evidence="1">
    <location>
        <position position="141"/>
    </location>
    <ligand>
        <name>NAD(+)</name>
        <dbReference type="ChEBI" id="CHEBI:57540"/>
    </ligand>
</feature>
<feature type="binding site" evidence="1">
    <location>
        <position position="150"/>
    </location>
    <ligand>
        <name>NAD(+)</name>
        <dbReference type="ChEBI" id="CHEBI:57540"/>
    </ligand>
</feature>
<feature type="binding site" evidence="1">
    <location>
        <begin position="168"/>
        <end position="171"/>
    </location>
    <ligand>
        <name>NAD(+)</name>
        <dbReference type="ChEBI" id="CHEBI:57540"/>
    </ligand>
</feature>
<feature type="binding site" evidence="1">
    <location>
        <position position="183"/>
    </location>
    <ligand>
        <name>Zn(2+)</name>
        <dbReference type="ChEBI" id="CHEBI:29105"/>
    </ligand>
</feature>
<feature type="binding site" evidence="1">
    <location>
        <position position="246"/>
    </location>
    <ligand>
        <name>Zn(2+)</name>
        <dbReference type="ChEBI" id="CHEBI:29105"/>
    </ligand>
</feature>
<feature type="binding site" evidence="1">
    <location>
        <position position="263"/>
    </location>
    <ligand>
        <name>Zn(2+)</name>
        <dbReference type="ChEBI" id="CHEBI:29105"/>
    </ligand>
</feature>
<gene>
    <name evidence="1" type="primary">aroB</name>
    <name type="ordered locus">Shew_0214</name>
</gene>
<keyword id="KW-0028">Amino-acid biosynthesis</keyword>
<keyword id="KW-0057">Aromatic amino acid biosynthesis</keyword>
<keyword id="KW-0170">Cobalt</keyword>
<keyword id="KW-0963">Cytoplasm</keyword>
<keyword id="KW-0456">Lyase</keyword>
<keyword id="KW-0479">Metal-binding</keyword>
<keyword id="KW-0520">NAD</keyword>
<keyword id="KW-0547">Nucleotide-binding</keyword>
<keyword id="KW-1185">Reference proteome</keyword>
<keyword id="KW-0862">Zinc</keyword>
<evidence type="ECO:0000255" key="1">
    <source>
        <dbReference type="HAMAP-Rule" id="MF_00110"/>
    </source>
</evidence>
<organism>
    <name type="scientific">Shewanella loihica (strain ATCC BAA-1088 / PV-4)</name>
    <dbReference type="NCBI Taxonomy" id="323850"/>
    <lineage>
        <taxon>Bacteria</taxon>
        <taxon>Pseudomonadati</taxon>
        <taxon>Pseudomonadota</taxon>
        <taxon>Gammaproteobacteria</taxon>
        <taxon>Alteromonadales</taxon>
        <taxon>Shewanellaceae</taxon>
        <taxon>Shewanella</taxon>
    </lineage>
</organism>
<proteinExistence type="inferred from homology"/>